<name>MARH6_PONAB</name>
<proteinExistence type="evidence at transcript level"/>
<protein>
    <recommendedName>
        <fullName>E3 ubiquitin-protein ligase MARCHF6</fullName>
        <ecNumber evidence="1">2.3.2.27</ecNumber>
    </recommendedName>
    <alternativeName>
        <fullName>Membrane-associated RING finger protein 6</fullName>
    </alternativeName>
    <alternativeName>
        <fullName>Membrane-associated RING-CH protein VI</fullName>
        <shortName>MARCH-VI</shortName>
    </alternativeName>
    <alternativeName>
        <fullName evidence="6">RING-type E3 ubiquitin transferase MARCH6</fullName>
    </alternativeName>
</protein>
<gene>
    <name type="primary">MARCHF6</name>
    <name type="synonym">MARCH6</name>
</gene>
<organism>
    <name type="scientific">Pongo abelii</name>
    <name type="common">Sumatran orangutan</name>
    <name type="synonym">Pongo pygmaeus abelii</name>
    <dbReference type="NCBI Taxonomy" id="9601"/>
    <lineage>
        <taxon>Eukaryota</taxon>
        <taxon>Metazoa</taxon>
        <taxon>Chordata</taxon>
        <taxon>Craniata</taxon>
        <taxon>Vertebrata</taxon>
        <taxon>Euteleostomi</taxon>
        <taxon>Mammalia</taxon>
        <taxon>Eutheria</taxon>
        <taxon>Euarchontoglires</taxon>
        <taxon>Primates</taxon>
        <taxon>Haplorrhini</taxon>
        <taxon>Catarrhini</taxon>
        <taxon>Hominidae</taxon>
        <taxon>Pongo</taxon>
    </lineage>
</organism>
<comment type="function">
    <text evidence="1 2">Endoplasmic reticulum membrane-associated E3 ubiquitin ligase that plays a critical role in mitigating endoplasmic reticulum stress, the regulation of cholesterol and lipid homeostasis, and ferroptosis. Acts as a pivotal component of both the Ac/N-degron pathway (targeting the N-terminal acetyl group of substrates) and the ER-associated protein degradation-cytosol (ERAD-C) pathway (targeting misfolded substrates). For instance, mediates the degradation of Ac/N-degron-bearing proteins such as the G-protein regulator RGS2 and the lipid droplet protein PLIN2 (By similarity). Suppresses endoplasmic reticulum stress and ferroptosis through cytosolic POMC degradation (By similarity). Prevents ferroptosis by acting as a NADPH sensor during lipid peroxidation through its C-terminal regulatory region. Facilitates also the degradation of selected endoplasmic reticulum proteins by associating with signal peptide peptidase for the turnover of endogenous tail-anchored proteins. Promotes ubiquitination of DIO2, leading to its degradation. By ubiquitinating and thereby modulating the stability of many proteins of the cholesterol pathway including SQLE, CYP51A1, CYP11A1 and HMGCR, acts as a crucial post-translational regulator of cholesterol synthesis (By similarity).</text>
</comment>
<comment type="catalytic activity">
    <reaction evidence="1">
        <text>S-ubiquitinyl-[E2 ubiquitin-conjugating enzyme]-L-cysteine + [acceptor protein]-L-lysine = [E2 ubiquitin-conjugating enzyme]-L-cysteine + N(6)-ubiquitinyl-[acceptor protein]-L-lysine.</text>
        <dbReference type="EC" id="2.3.2.27"/>
    </reaction>
</comment>
<comment type="pathway">
    <text evidence="1">Protein modification; protein ubiquitination.</text>
</comment>
<comment type="subunit">
    <text evidence="1">Interacts with DIO2. Interacts with SQLE.</text>
</comment>
<comment type="subcellular location">
    <subcellularLocation>
        <location evidence="1">Endoplasmic reticulum membrane</location>
        <topology evidence="1">Multi-pass membrane protein</topology>
    </subcellularLocation>
</comment>
<comment type="domain">
    <text evidence="1">The RING-CH-type zinc finger domain is required for E3 ligase activity.</text>
</comment>
<comment type="PTM">
    <text evidence="1">Auto-ubiquitinated, which results in proteasomal degradation. Deubiquitinated by USP19; protecting MARCHF6 from p97-mediated proteasomal degradation.</text>
</comment>
<comment type="similarity">
    <text evidence="6">Belongs to the DOA10/MARCHF6 family.</text>
</comment>
<evidence type="ECO:0000250" key="1">
    <source>
        <dbReference type="UniProtKB" id="O60337"/>
    </source>
</evidence>
<evidence type="ECO:0000250" key="2">
    <source>
        <dbReference type="UniProtKB" id="Q6ZQ89"/>
    </source>
</evidence>
<evidence type="ECO:0000255" key="3"/>
<evidence type="ECO:0000255" key="4">
    <source>
        <dbReference type="PROSITE-ProRule" id="PRU00623"/>
    </source>
</evidence>
<evidence type="ECO:0000256" key="5">
    <source>
        <dbReference type="SAM" id="MobiDB-lite"/>
    </source>
</evidence>
<evidence type="ECO:0000305" key="6"/>
<keyword id="KW-0007">Acetylation</keyword>
<keyword id="KW-0256">Endoplasmic reticulum</keyword>
<keyword id="KW-0472">Membrane</keyword>
<keyword id="KW-0479">Metal-binding</keyword>
<keyword id="KW-1185">Reference proteome</keyword>
<keyword id="KW-0808">Transferase</keyword>
<keyword id="KW-0812">Transmembrane</keyword>
<keyword id="KW-1133">Transmembrane helix</keyword>
<keyword id="KW-0832">Ubl conjugation</keyword>
<keyword id="KW-0833">Ubl conjugation pathway</keyword>
<keyword id="KW-0862">Zinc</keyword>
<keyword id="KW-0863">Zinc-finger</keyword>
<feature type="chain" id="PRO_0000274300" description="E3 ubiquitin-protein ligase MARCHF6">
    <location>
        <begin position="1"/>
        <end position="910"/>
    </location>
</feature>
<feature type="topological domain" description="Cytoplasmic" evidence="1">
    <location>
        <begin position="1"/>
        <end position="91"/>
    </location>
</feature>
<feature type="transmembrane region" description="Helical" evidence="3">
    <location>
        <begin position="92"/>
        <end position="112"/>
    </location>
</feature>
<feature type="topological domain" description="Extracellular" evidence="3">
    <location>
        <begin position="113"/>
        <end position="142"/>
    </location>
</feature>
<feature type="transmembrane region" description="Helical" evidence="3">
    <location>
        <begin position="143"/>
        <end position="163"/>
    </location>
</feature>
<feature type="topological domain" description="Cytoplasmic" evidence="3">
    <location>
        <begin position="164"/>
        <end position="283"/>
    </location>
</feature>
<feature type="transmembrane region" description="Helical" evidence="3">
    <location>
        <begin position="284"/>
        <end position="304"/>
    </location>
</feature>
<feature type="topological domain" description="Extracellular" evidence="3">
    <location>
        <begin position="305"/>
        <end position="336"/>
    </location>
</feature>
<feature type="transmembrane region" description="Helical" evidence="3">
    <location>
        <begin position="337"/>
        <end position="357"/>
    </location>
</feature>
<feature type="topological domain" description="Cytoplasmic" evidence="3">
    <location>
        <begin position="358"/>
        <end position="376"/>
    </location>
</feature>
<feature type="transmembrane region" description="Helical" evidence="3">
    <location>
        <begin position="377"/>
        <end position="397"/>
    </location>
</feature>
<feature type="topological domain" description="Extracellular" evidence="3">
    <location>
        <begin position="398"/>
        <end position="421"/>
    </location>
</feature>
<feature type="transmembrane region" description="Helical" evidence="3">
    <location>
        <begin position="422"/>
        <end position="442"/>
    </location>
</feature>
<feature type="topological domain" description="Cytoplasmic" evidence="3">
    <location>
        <begin position="443"/>
        <end position="480"/>
    </location>
</feature>
<feature type="transmembrane region" description="Helical" evidence="3">
    <location>
        <begin position="481"/>
        <end position="501"/>
    </location>
</feature>
<feature type="topological domain" description="Extracellular" evidence="3">
    <location>
        <begin position="502"/>
        <end position="519"/>
    </location>
</feature>
<feature type="transmembrane region" description="Helical" evidence="3">
    <location>
        <begin position="520"/>
        <end position="540"/>
    </location>
</feature>
<feature type="topological domain" description="Cytoplasmic" evidence="3">
    <location>
        <begin position="541"/>
        <end position="632"/>
    </location>
</feature>
<feature type="transmembrane region" description="Helical" evidence="3">
    <location>
        <begin position="633"/>
        <end position="653"/>
    </location>
</feature>
<feature type="topological domain" description="Extracellular" evidence="3">
    <location>
        <begin position="654"/>
        <end position="678"/>
    </location>
</feature>
<feature type="transmembrane region" description="Helical" evidence="3">
    <location>
        <begin position="679"/>
        <end position="699"/>
    </location>
</feature>
<feature type="topological domain" description="Cytoplasmic" evidence="3">
    <location>
        <begin position="700"/>
        <end position="721"/>
    </location>
</feature>
<feature type="transmembrane region" description="Helical" evidence="3">
    <location>
        <begin position="722"/>
        <end position="742"/>
    </location>
</feature>
<feature type="topological domain" description="Extracellular" evidence="3">
    <location>
        <begin position="743"/>
        <end position="764"/>
    </location>
</feature>
<feature type="transmembrane region" description="Helical" evidence="3">
    <location>
        <begin position="765"/>
        <end position="785"/>
    </location>
</feature>
<feature type="topological domain" description="Cytoplasmic" evidence="3">
    <location>
        <begin position="786"/>
        <end position="815"/>
    </location>
</feature>
<feature type="transmembrane region" description="Helical" evidence="3">
    <location>
        <begin position="816"/>
        <end position="836"/>
    </location>
</feature>
<feature type="topological domain" description="Extracellular" evidence="3">
    <location>
        <begin position="837"/>
        <end position="848"/>
    </location>
</feature>
<feature type="transmembrane region" description="Helical" evidence="3">
    <location>
        <begin position="849"/>
        <end position="869"/>
    </location>
</feature>
<feature type="topological domain" description="Cytoplasmic" evidence="1">
    <location>
        <begin position="870"/>
        <end position="910"/>
    </location>
</feature>
<feature type="zinc finger region" description="RING-CH-type" evidence="4">
    <location>
        <begin position="1"/>
        <end position="62"/>
    </location>
</feature>
<feature type="region of interest" description="Disordered" evidence="5">
    <location>
        <begin position="185"/>
        <end position="256"/>
    </location>
</feature>
<feature type="compositionally biased region" description="Acidic residues" evidence="5">
    <location>
        <begin position="223"/>
        <end position="248"/>
    </location>
</feature>
<feature type="binding site" evidence="4">
    <location>
        <position position="9"/>
    </location>
    <ligand>
        <name>Zn(2+)</name>
        <dbReference type="ChEBI" id="CHEBI:29105"/>
        <label>1</label>
    </ligand>
</feature>
<feature type="binding site" evidence="4">
    <location>
        <position position="12"/>
    </location>
    <ligand>
        <name>Zn(2+)</name>
        <dbReference type="ChEBI" id="CHEBI:29105"/>
        <label>1</label>
    </ligand>
</feature>
<feature type="binding site" evidence="4">
    <location>
        <position position="26"/>
    </location>
    <ligand>
        <name>Zn(2+)</name>
        <dbReference type="ChEBI" id="CHEBI:29105"/>
        <label>2</label>
    </ligand>
</feature>
<feature type="binding site" evidence="4">
    <location>
        <position position="28"/>
    </location>
    <ligand>
        <name>Zn(2+)</name>
        <dbReference type="ChEBI" id="CHEBI:29105"/>
        <label>2</label>
    </ligand>
</feature>
<feature type="binding site" evidence="4">
    <location>
        <position position="36"/>
    </location>
    <ligand>
        <name>Zn(2+)</name>
        <dbReference type="ChEBI" id="CHEBI:29105"/>
        <label>1</label>
    </ligand>
</feature>
<feature type="binding site" evidence="4">
    <location>
        <position position="39"/>
    </location>
    <ligand>
        <name>Zn(2+)</name>
        <dbReference type="ChEBI" id="CHEBI:29105"/>
        <label>1</label>
    </ligand>
</feature>
<feature type="binding site" evidence="4">
    <location>
        <position position="52"/>
    </location>
    <ligand>
        <name>Zn(2+)</name>
        <dbReference type="ChEBI" id="CHEBI:29105"/>
        <label>2</label>
    </ligand>
</feature>
<feature type="binding site" evidence="4">
    <location>
        <position position="55"/>
    </location>
    <ligand>
        <name>Zn(2+)</name>
        <dbReference type="ChEBI" id="CHEBI:29105"/>
        <label>2</label>
    </ligand>
</feature>
<feature type="modified residue" description="N-acetylmethionine" evidence="1">
    <location>
        <position position="1"/>
    </location>
</feature>
<dbReference type="EC" id="2.3.2.27" evidence="1"/>
<dbReference type="EMBL" id="CR859271">
    <property type="protein sequence ID" value="CAH91449.1"/>
    <property type="molecule type" value="mRNA"/>
</dbReference>
<dbReference type="SMR" id="Q5R9W1"/>
<dbReference type="STRING" id="9601.ENSPPYP00000017141"/>
<dbReference type="eggNOG" id="KOG1609">
    <property type="taxonomic scope" value="Eukaryota"/>
</dbReference>
<dbReference type="InParanoid" id="Q5R9W1"/>
<dbReference type="UniPathway" id="UPA00143"/>
<dbReference type="Proteomes" id="UP000001595">
    <property type="component" value="Unplaced"/>
</dbReference>
<dbReference type="GO" id="GO:0005789">
    <property type="term" value="C:endoplasmic reticulum membrane"/>
    <property type="evidence" value="ECO:0000250"/>
    <property type="project" value="UniProtKB"/>
</dbReference>
<dbReference type="GO" id="GO:0061630">
    <property type="term" value="F:ubiquitin protein ligase activity"/>
    <property type="evidence" value="ECO:0000250"/>
    <property type="project" value="UniProtKB"/>
</dbReference>
<dbReference type="GO" id="GO:0008270">
    <property type="term" value="F:zinc ion binding"/>
    <property type="evidence" value="ECO:0007669"/>
    <property type="project" value="UniProtKB-KW"/>
</dbReference>
<dbReference type="GO" id="GO:0036503">
    <property type="term" value="P:ERAD pathway"/>
    <property type="evidence" value="ECO:0007669"/>
    <property type="project" value="TreeGrafter"/>
</dbReference>
<dbReference type="GO" id="GO:0043161">
    <property type="term" value="P:proteasome-mediated ubiquitin-dependent protein catabolic process"/>
    <property type="evidence" value="ECO:0000250"/>
    <property type="project" value="UniProtKB"/>
</dbReference>
<dbReference type="GO" id="GO:0070936">
    <property type="term" value="P:protein K48-linked ubiquitination"/>
    <property type="evidence" value="ECO:0000250"/>
    <property type="project" value="UniProtKB"/>
</dbReference>
<dbReference type="GO" id="GO:0016567">
    <property type="term" value="P:protein ubiquitination"/>
    <property type="evidence" value="ECO:0000250"/>
    <property type="project" value="UniProtKB"/>
</dbReference>
<dbReference type="CDD" id="cd16702">
    <property type="entry name" value="RING_CH-C4HC3_MARCH6"/>
    <property type="match status" value="1"/>
</dbReference>
<dbReference type="FunFam" id="3.30.40.10:FF:000096">
    <property type="entry name" value="E3 ubiquitin-protein ligase MARCH6"/>
    <property type="match status" value="1"/>
</dbReference>
<dbReference type="Gene3D" id="3.30.40.10">
    <property type="entry name" value="Zinc/RING finger domain, C3HC4 (zinc finger)"/>
    <property type="match status" value="1"/>
</dbReference>
<dbReference type="InterPro" id="IPR056521">
    <property type="entry name" value="MARCHF6-like_C"/>
</dbReference>
<dbReference type="InterPro" id="IPR011016">
    <property type="entry name" value="Znf_RING-CH"/>
</dbReference>
<dbReference type="InterPro" id="IPR013083">
    <property type="entry name" value="Znf_RING/FYVE/PHD"/>
</dbReference>
<dbReference type="PANTHER" id="PTHR13145:SF0">
    <property type="entry name" value="E3 UBIQUITIN-PROTEIN LIGASE MARCHF6"/>
    <property type="match status" value="1"/>
</dbReference>
<dbReference type="PANTHER" id="PTHR13145">
    <property type="entry name" value="SSM4 PROTEIN"/>
    <property type="match status" value="1"/>
</dbReference>
<dbReference type="Pfam" id="PF23113">
    <property type="entry name" value="MARCHF6_C"/>
    <property type="match status" value="1"/>
</dbReference>
<dbReference type="Pfam" id="PF12906">
    <property type="entry name" value="RINGv"/>
    <property type="match status" value="1"/>
</dbReference>
<dbReference type="SMART" id="SM00744">
    <property type="entry name" value="RINGv"/>
    <property type="match status" value="1"/>
</dbReference>
<dbReference type="SUPFAM" id="SSF57850">
    <property type="entry name" value="RING/U-box"/>
    <property type="match status" value="1"/>
</dbReference>
<dbReference type="PROSITE" id="PS51292">
    <property type="entry name" value="ZF_RING_CH"/>
    <property type="match status" value="1"/>
</dbReference>
<sequence length="910" mass="102418">MDTAEEDICRVCRSEGTPEKPLYHPCVCTGSIKFIHQECLVQWLKHSRKEYCELCKHRFAFTPIYSPDMPSRLPIQDIFAGLVTSIGTAIRYWFHYTLVAFAWLGVVPLTACRIYKCLFTGSVSSLLTLPLDMLSTENLLADCLQGCFVVTCTLCAFISLVWLREQIVHGGAPIWLEHAAPPFNAAGHHQNEAPAGGNGAENVAADQPANPPAENAVVGENPDAQDDQAEEEEEDNEEEDDAGVEDAADANNGAQDDMNWNALEWDRAAEELTWERMLGLDGSLVFLEHVFWVVSLNTLFILVFAFCPYHIGHFSLVGLGFEEHVQASHFEGLITTIVGYILLAITLIICHGLATLVKFHRSRRLLGVCYIVVKVSLLVVVEIGVFPLICGWWLDICSLEMFDATLKDRELSFQSAPGTTMFLHWLVGMVYVFYFASFILLLREVLRPGVLWFLRNLNDPDFNPVQEMIHLPIYRHLRRFILSVIVFGSIVLLMLWLPIRIIKSVLPNFLPYNVMLYSDAPVSELSLELLLLQVVLPALLEQRTHEAVAEGLVRAWTVTAGYLLDLHSYLLGDQEENENSANQQVNNNQHARNNNAIPVVGEGLHAAHQAILQQGGPVGFQPYRRPLNFPLRIFLLIVFMCITLLIASLICLTLPVFAGRWLMSFWTGTAKIHELYTAACGLYVCWLTIRAVTVMVAWMPQGRRVVFQKVKEWSLMIMKTLIVAVLLAGVVPLLLGLLFELVIVAPLRVPLDQTPLFYPWQDWALGVLHAKIIAAITLMGPQWWLKTVIEQVYANGIRNIDLHYIVRKLAAPVISVLLLSLCVPYVIASGVVPLLGVTAEMQNLVHRRIYPFLLMVVVLMAILSFQVRQFKRLYEHIKNDKYLVGQRLVNYERKSGKQGSSPPPPQSSQE</sequence>
<accession>Q5R9W1</accession>
<reference key="1">
    <citation type="submission" date="2004-11" db="EMBL/GenBank/DDBJ databases">
        <authorList>
            <consortium name="The German cDNA consortium"/>
        </authorList>
    </citation>
    <scope>NUCLEOTIDE SEQUENCE [LARGE SCALE MRNA]</scope>
    <source>
        <tissue>Heart</tissue>
    </source>
</reference>